<protein>
    <recommendedName>
        <fullName>Protein canopy homolog 4</fullName>
    </recommendedName>
</protein>
<dbReference type="EMBL" id="BC104626">
    <property type="protein sequence ID" value="AAI04627.1"/>
    <property type="molecule type" value="mRNA"/>
</dbReference>
<dbReference type="RefSeq" id="NP_001029425.1">
    <property type="nucleotide sequence ID" value="NM_001034253.2"/>
</dbReference>
<dbReference type="FunCoup" id="Q3SWX1">
    <property type="interactions" value="2192"/>
</dbReference>
<dbReference type="STRING" id="9913.ENSBTAP00000037026"/>
<dbReference type="PaxDb" id="9913-ENSBTAP00000037026"/>
<dbReference type="PeptideAtlas" id="Q3SWX1"/>
<dbReference type="GeneID" id="505637"/>
<dbReference type="KEGG" id="bta:505637"/>
<dbReference type="CTD" id="245812"/>
<dbReference type="VEuPathDB" id="HostDB:ENSBTAG00000007016"/>
<dbReference type="eggNOG" id="KOG4052">
    <property type="taxonomic scope" value="Eukaryota"/>
</dbReference>
<dbReference type="HOGENOM" id="CLU_078068_0_1_1"/>
<dbReference type="InParanoid" id="Q3SWX1"/>
<dbReference type="OMA" id="CKFLTME"/>
<dbReference type="OrthoDB" id="6020060at2759"/>
<dbReference type="TreeFam" id="TF318951"/>
<dbReference type="Proteomes" id="UP000009136">
    <property type="component" value="Chromosome 25"/>
</dbReference>
<dbReference type="Bgee" id="ENSBTAG00000007016">
    <property type="expression patterns" value="Expressed in granulosa cell and 106 other cell types or tissues"/>
</dbReference>
<dbReference type="GO" id="GO:0005576">
    <property type="term" value="C:extracellular region"/>
    <property type="evidence" value="ECO:0007669"/>
    <property type="project" value="UniProtKB-SubCell"/>
</dbReference>
<dbReference type="GO" id="GO:0005102">
    <property type="term" value="F:signaling receptor binding"/>
    <property type="evidence" value="ECO:0000318"/>
    <property type="project" value="GO_Central"/>
</dbReference>
<dbReference type="InterPro" id="IPR021852">
    <property type="entry name" value="DUF3456"/>
</dbReference>
<dbReference type="PANTHER" id="PTHR15382">
    <property type="entry name" value="CTG4A-RELATED"/>
    <property type="match status" value="1"/>
</dbReference>
<dbReference type="PANTHER" id="PTHR15382:SF3">
    <property type="entry name" value="PROTEIN CANOPY HOMOLOG 4"/>
    <property type="match status" value="1"/>
</dbReference>
<dbReference type="Pfam" id="PF11938">
    <property type="entry name" value="DUF3456"/>
    <property type="match status" value="1"/>
</dbReference>
<proteinExistence type="evidence at transcript level"/>
<name>CNPY4_BOVIN</name>
<gene>
    <name type="primary">CNPY4</name>
</gene>
<keyword id="KW-1015">Disulfide bond</keyword>
<keyword id="KW-1185">Reference proteome</keyword>
<keyword id="KW-0964">Secreted</keyword>
<keyword id="KW-0732">Signal</keyword>
<sequence>MGPVRLGTLLFILTVYGAWAGTPKEEEDDTERLPSKCEVCKLLSLELQEELSRTGRSREVLELGQVLDTGKRKRHIPYSVSETRLEEALENLCERILDYSVHAERKGSLRYAKGQSQTMATLKGLVQKGVKVDLGIPLELWDEPSVEVTFLKKQCETMLEQFEDVVGDWYFHHQEQPLQHFLCEGHVLPASETACLQETWTGKEKITDGQEKTEEEEQDQEEEEMTNTPVHSQHDPEDL</sequence>
<evidence type="ECO:0000250" key="1"/>
<evidence type="ECO:0000255" key="2"/>
<evidence type="ECO:0000256" key="3">
    <source>
        <dbReference type="SAM" id="MobiDB-lite"/>
    </source>
</evidence>
<evidence type="ECO:0000305" key="4"/>
<reference key="1">
    <citation type="submission" date="2005-09" db="EMBL/GenBank/DDBJ databases">
        <authorList>
            <consortium name="NIH - Mammalian Gene Collection (MGC) project"/>
        </authorList>
    </citation>
    <scope>NUCLEOTIDE SEQUENCE [LARGE SCALE MRNA]</scope>
    <source>
        <strain>Hereford</strain>
        <tissue>Ascending colon</tissue>
    </source>
</reference>
<accession>Q3SWX1</accession>
<organism>
    <name type="scientific">Bos taurus</name>
    <name type="common">Bovine</name>
    <dbReference type="NCBI Taxonomy" id="9913"/>
    <lineage>
        <taxon>Eukaryota</taxon>
        <taxon>Metazoa</taxon>
        <taxon>Chordata</taxon>
        <taxon>Craniata</taxon>
        <taxon>Vertebrata</taxon>
        <taxon>Euteleostomi</taxon>
        <taxon>Mammalia</taxon>
        <taxon>Eutheria</taxon>
        <taxon>Laurasiatheria</taxon>
        <taxon>Artiodactyla</taxon>
        <taxon>Ruminantia</taxon>
        <taxon>Pecora</taxon>
        <taxon>Bovidae</taxon>
        <taxon>Bovinae</taxon>
        <taxon>Bos</taxon>
    </lineage>
</organism>
<comment type="function">
    <text evidence="1">Plays a role in the regulation of the cell surface expression of TLR4.</text>
</comment>
<comment type="subunit">
    <text evidence="1">Interacts with TLR4.</text>
</comment>
<comment type="subcellular location">
    <subcellularLocation>
        <location evidence="4">Secreted</location>
    </subcellularLocation>
</comment>
<comment type="similarity">
    <text evidence="4">Belongs to the canopy family.</text>
</comment>
<feature type="signal peptide" evidence="2">
    <location>
        <begin position="1"/>
        <end position="20"/>
    </location>
</feature>
<feature type="chain" id="PRO_0000314017" description="Protein canopy homolog 4">
    <location>
        <begin position="21"/>
        <end position="239"/>
    </location>
</feature>
<feature type="region of interest" description="Disordered" evidence="3">
    <location>
        <begin position="199"/>
        <end position="239"/>
    </location>
</feature>
<feature type="compositionally biased region" description="Basic and acidic residues" evidence="3">
    <location>
        <begin position="201"/>
        <end position="212"/>
    </location>
</feature>
<feature type="compositionally biased region" description="Acidic residues" evidence="3">
    <location>
        <begin position="213"/>
        <end position="225"/>
    </location>
</feature>
<feature type="disulfide bond" evidence="1">
    <location>
        <begin position="37"/>
        <end position="195"/>
    </location>
</feature>
<feature type="disulfide bond" evidence="1">
    <location>
        <begin position="40"/>
        <end position="183"/>
    </location>
</feature>
<feature type="disulfide bond" evidence="1">
    <location>
        <begin position="93"/>
        <end position="155"/>
    </location>
</feature>